<accession>Q9KJC1</accession>
<reference key="1">
    <citation type="journal article" date="2001" name="Microbiology">
        <title>Identification and molecular characterization of an efflux system involved in Pseudomonas putida S12 multidrug resistance.</title>
        <authorList>
            <person name="Kieboom J."/>
            <person name="de Bont J.A.M."/>
        </authorList>
    </citation>
    <scope>NUCLEOTIDE SEQUENCE [GENOMIC DNA]</scope>
    <scope>EFFLUX PUMP SUBSTRATES</scope>
    <scope>INDUCTION</scope>
    <source>
        <strain>ATCC 700801 / S12</strain>
    </source>
</reference>
<feature type="signal peptide" evidence="1">
    <location>
        <begin position="1"/>
        <end position="17"/>
    </location>
</feature>
<feature type="chain" id="PRO_0000031003" description="Antibiotic efflux pump outer membrane protein ArpC">
    <location>
        <begin position="18"/>
        <end position="484"/>
    </location>
</feature>
<feature type="lipid moiety-binding region" description="N-palmitoyl cysteine" evidence="1">
    <location>
        <position position="18"/>
    </location>
</feature>
<feature type="lipid moiety-binding region" description="S-diacylglycerol cysteine" evidence="1">
    <location>
        <position position="18"/>
    </location>
</feature>
<dbReference type="EMBL" id="AF183959">
    <property type="protein sequence ID" value="AAF73833.1"/>
    <property type="molecule type" value="Genomic_DNA"/>
</dbReference>
<dbReference type="RefSeq" id="WP_019437966.1">
    <property type="nucleotide sequence ID" value="NZ_CP099727.1"/>
</dbReference>
<dbReference type="SMR" id="Q9KJC1"/>
<dbReference type="eggNOG" id="COG1538">
    <property type="taxonomic scope" value="Bacteria"/>
</dbReference>
<dbReference type="GO" id="GO:0009279">
    <property type="term" value="C:cell outer membrane"/>
    <property type="evidence" value="ECO:0007669"/>
    <property type="project" value="UniProtKB-SubCell"/>
</dbReference>
<dbReference type="GO" id="GO:0015562">
    <property type="term" value="F:efflux transmembrane transporter activity"/>
    <property type="evidence" value="ECO:0007669"/>
    <property type="project" value="InterPro"/>
</dbReference>
<dbReference type="GO" id="GO:0046677">
    <property type="term" value="P:response to antibiotic"/>
    <property type="evidence" value="ECO:0007669"/>
    <property type="project" value="UniProtKB-KW"/>
</dbReference>
<dbReference type="Gene3D" id="1.20.1600.10">
    <property type="entry name" value="Outer membrane efflux proteins (OEP)"/>
    <property type="match status" value="1"/>
</dbReference>
<dbReference type="Gene3D" id="2.20.200.10">
    <property type="entry name" value="Outer membrane efflux proteins (OEP)"/>
    <property type="match status" value="1"/>
</dbReference>
<dbReference type="InterPro" id="IPR050737">
    <property type="entry name" value="OMF"/>
</dbReference>
<dbReference type="InterPro" id="IPR003423">
    <property type="entry name" value="OMP_efflux"/>
</dbReference>
<dbReference type="InterPro" id="IPR010131">
    <property type="entry name" value="RND_efflux_OM_lipoprot_NodT"/>
</dbReference>
<dbReference type="NCBIfam" id="TIGR01845">
    <property type="entry name" value="outer_NodT"/>
    <property type="match status" value="1"/>
</dbReference>
<dbReference type="PANTHER" id="PTHR30203:SF32">
    <property type="entry name" value="CATION EFFLUX SYSTEM PROTEIN CUSC"/>
    <property type="match status" value="1"/>
</dbReference>
<dbReference type="PANTHER" id="PTHR30203">
    <property type="entry name" value="OUTER MEMBRANE CATION EFFLUX PROTEIN"/>
    <property type="match status" value="1"/>
</dbReference>
<dbReference type="Pfam" id="PF02321">
    <property type="entry name" value="OEP"/>
    <property type="match status" value="2"/>
</dbReference>
<dbReference type="SUPFAM" id="SSF56954">
    <property type="entry name" value="Outer membrane efflux proteins (OEP)"/>
    <property type="match status" value="1"/>
</dbReference>
<dbReference type="PROSITE" id="PS51257">
    <property type="entry name" value="PROKAR_LIPOPROTEIN"/>
    <property type="match status" value="1"/>
</dbReference>
<name>ARPC_PSEPU</name>
<evidence type="ECO:0000255" key="1">
    <source>
        <dbReference type="PROSITE-ProRule" id="PRU00303"/>
    </source>
</evidence>
<evidence type="ECO:0000269" key="2">
    <source>
    </source>
</evidence>
<evidence type="ECO:0000305" key="3"/>
<comment type="function">
    <text>The outer membrane component of an antibiotic efflux pump. Confers resistance to numerous structurally unrelated antibiotics such as carbenicillin, chloramphenicol, erythromycin, novobiocin, streptomycin and tetracycline. Is not involved in organic solvent efflux.</text>
</comment>
<comment type="subcellular location">
    <subcellularLocation>
        <location evidence="3">Cell outer membrane</location>
        <topology evidence="1">Lipid-anchor</topology>
    </subcellularLocation>
</comment>
<comment type="induction">
    <text evidence="2">The arpABC operon was not seen to be induced by carbenicillin, chloramphenicol, erythromycin nor by hexane, toluene or p-xylene.</text>
</comment>
<comment type="similarity">
    <text evidence="3">Belongs to the outer membrane factor (OMF) (TC 1.B.17) family.</text>
</comment>
<comment type="caution">
    <text evidence="3">Despite being nearly identical to the ttgABC operon in strain DOT-T1E and the mepABC operon in strain KT2442-TOL this operon does not function in solvent efflux. This may be due to different protein expression levels. In strain KT2440 the equivalent operon does not seem to function in toluene efflux.</text>
</comment>
<sequence>MTKSLLSLAVTAFILGGCSLIPDYQAPEAPVAAQWPQGPAYSPTQSADVAAAEQGWRQFFHDPALQQLIQTSLVNNRDLRVAALNLDAYRAQYRIQRADLFPAVSATGSGSRQRVPANMSQTGESGITSQYSATLGVSAYELDLFGRVRSLTEQALETYLSSEQARRSTQIALVASVANAYYTWQADQALFKLTEETLKTYEESYNLTRRSNEVGVASALDVSQARTAVEGARVKYSQYQRLVAQDVNSLTVLLGTGIPADLAKPLELDADQLAEVPAGLPSDILQRRPDIQEAEHLLKAANANIGAARAAFFPSISLTANAGSLSPDMGHLFSGGQGTWLFQPQINLPIFNAGSLKASLDYSKIQKDINVAKYEKTIQTAFQEVSDGLAARKTFEEQLQAQRDLVQANQDYYRLAERRYRIGIDSNLTFLDAQRNLFSAQQALIGDRLSQLTSEVNLYKALGGGWYEQTGQANQQASVETPKG</sequence>
<gene>
    <name type="primary">arpC</name>
</gene>
<organism>
    <name type="scientific">Pseudomonas putida</name>
    <name type="common">Arthrobacter siderocapsulatus</name>
    <dbReference type="NCBI Taxonomy" id="303"/>
    <lineage>
        <taxon>Bacteria</taxon>
        <taxon>Pseudomonadati</taxon>
        <taxon>Pseudomonadota</taxon>
        <taxon>Gammaproteobacteria</taxon>
        <taxon>Pseudomonadales</taxon>
        <taxon>Pseudomonadaceae</taxon>
        <taxon>Pseudomonas</taxon>
    </lineage>
</organism>
<proteinExistence type="evidence at transcript level"/>
<protein>
    <recommendedName>
        <fullName>Antibiotic efflux pump outer membrane protein ArpC</fullName>
    </recommendedName>
</protein>
<keyword id="KW-0046">Antibiotic resistance</keyword>
<keyword id="KW-0998">Cell outer membrane</keyword>
<keyword id="KW-0449">Lipoprotein</keyword>
<keyword id="KW-0472">Membrane</keyword>
<keyword id="KW-0564">Palmitate</keyword>
<keyword id="KW-0732">Signal</keyword>
<keyword id="KW-0812">Transmembrane</keyword>
<keyword id="KW-1134">Transmembrane beta strand</keyword>
<keyword id="KW-0813">Transport</keyword>